<accession>P63954</accession>
<accession>Q99QW3</accession>
<keyword id="KW-0028">Amino-acid biosynthesis</keyword>
<keyword id="KW-0368">Histidine biosynthesis</keyword>
<keyword id="KW-0479">Metal-binding</keyword>
<keyword id="KW-0520">NAD</keyword>
<keyword id="KW-0560">Oxidoreductase</keyword>
<keyword id="KW-0862">Zinc</keyword>
<organism>
    <name type="scientific">Staphylococcus aureus (strain MW2)</name>
    <dbReference type="NCBI Taxonomy" id="196620"/>
    <lineage>
        <taxon>Bacteria</taxon>
        <taxon>Bacillati</taxon>
        <taxon>Bacillota</taxon>
        <taxon>Bacilli</taxon>
        <taxon>Bacillales</taxon>
        <taxon>Staphylococcaceae</taxon>
        <taxon>Staphylococcus</taxon>
    </lineage>
</organism>
<gene>
    <name evidence="1" type="primary">hisD</name>
    <name type="ordered locus">MW2597</name>
</gene>
<comment type="function">
    <text evidence="1">Catalyzes the sequential NAD-dependent oxidations of L-histidinol to L-histidinaldehyde and then to L-histidine.</text>
</comment>
<comment type="catalytic activity">
    <reaction evidence="1">
        <text>L-histidinol + 2 NAD(+) + H2O = L-histidine + 2 NADH + 3 H(+)</text>
        <dbReference type="Rhea" id="RHEA:20641"/>
        <dbReference type="ChEBI" id="CHEBI:15377"/>
        <dbReference type="ChEBI" id="CHEBI:15378"/>
        <dbReference type="ChEBI" id="CHEBI:57540"/>
        <dbReference type="ChEBI" id="CHEBI:57595"/>
        <dbReference type="ChEBI" id="CHEBI:57699"/>
        <dbReference type="ChEBI" id="CHEBI:57945"/>
        <dbReference type="EC" id="1.1.1.23"/>
    </reaction>
</comment>
<comment type="cofactor">
    <cofactor evidence="1">
        <name>Zn(2+)</name>
        <dbReference type="ChEBI" id="CHEBI:29105"/>
    </cofactor>
    <text evidence="1">Binds 1 zinc ion per subunit.</text>
</comment>
<comment type="pathway">
    <text evidence="1">Amino-acid biosynthesis; L-histidine biosynthesis; L-histidine from 5-phospho-alpha-D-ribose 1-diphosphate: step 9/9.</text>
</comment>
<comment type="similarity">
    <text evidence="1">Belongs to the histidinol dehydrogenase family.</text>
</comment>
<feature type="chain" id="PRO_0000135853" description="Histidinol dehydrogenase">
    <location>
        <begin position="1"/>
        <end position="416"/>
    </location>
</feature>
<feature type="active site" description="Proton acceptor" evidence="1">
    <location>
        <position position="314"/>
    </location>
</feature>
<feature type="active site" description="Proton acceptor" evidence="1">
    <location>
        <position position="315"/>
    </location>
</feature>
<feature type="binding site" evidence="1">
    <location>
        <position position="117"/>
    </location>
    <ligand>
        <name>NAD(+)</name>
        <dbReference type="ChEBI" id="CHEBI:57540"/>
    </ligand>
</feature>
<feature type="binding site" evidence="1">
    <location>
        <position position="178"/>
    </location>
    <ligand>
        <name>NAD(+)</name>
        <dbReference type="ChEBI" id="CHEBI:57540"/>
    </ligand>
</feature>
<feature type="binding site" evidence="1">
    <location>
        <position position="201"/>
    </location>
    <ligand>
        <name>NAD(+)</name>
        <dbReference type="ChEBI" id="CHEBI:57540"/>
    </ligand>
</feature>
<feature type="binding site" evidence="1">
    <location>
        <position position="224"/>
    </location>
    <ligand>
        <name>substrate</name>
    </ligand>
</feature>
<feature type="binding site" evidence="1">
    <location>
        <position position="246"/>
    </location>
    <ligand>
        <name>substrate</name>
    </ligand>
</feature>
<feature type="binding site" evidence="1">
    <location>
        <position position="246"/>
    </location>
    <ligand>
        <name>Zn(2+)</name>
        <dbReference type="ChEBI" id="CHEBI:29105"/>
    </ligand>
</feature>
<feature type="binding site" evidence="1">
    <location>
        <position position="249"/>
    </location>
    <ligand>
        <name>substrate</name>
    </ligand>
</feature>
<feature type="binding site" evidence="1">
    <location>
        <position position="249"/>
    </location>
    <ligand>
        <name>Zn(2+)</name>
        <dbReference type="ChEBI" id="CHEBI:29105"/>
    </ligand>
</feature>
<feature type="binding site" evidence="1">
    <location>
        <position position="315"/>
    </location>
    <ligand>
        <name>substrate</name>
    </ligand>
</feature>
<feature type="binding site" evidence="1">
    <location>
        <position position="348"/>
    </location>
    <ligand>
        <name>substrate</name>
    </ligand>
</feature>
<feature type="binding site" evidence="1">
    <location>
        <position position="348"/>
    </location>
    <ligand>
        <name>Zn(2+)</name>
        <dbReference type="ChEBI" id="CHEBI:29105"/>
    </ligand>
</feature>
<feature type="binding site" evidence="1">
    <location>
        <position position="402"/>
    </location>
    <ligand>
        <name>substrate</name>
    </ligand>
</feature>
<feature type="binding site" evidence="1">
    <location>
        <position position="407"/>
    </location>
    <ligand>
        <name>substrate</name>
    </ligand>
</feature>
<feature type="binding site" evidence="1">
    <location>
        <position position="407"/>
    </location>
    <ligand>
        <name>Zn(2+)</name>
        <dbReference type="ChEBI" id="CHEBI:29105"/>
    </ligand>
</feature>
<sequence length="416" mass="46161">MLNAQQFLNQFSLEAPLDESLYPIIRDICQEVKVHGDKALKMYNLTFDHTKTDHLEISHEQIKAAFDTLDEKTKQALQQSYERIKAYQESIKQTNQQLEESVECYEIYHPLESVGIYVPGGKASYPSTVLMTATLAQVAGVENIVVVTPPQPNGVSQEVLAACYITQVNQVFQVGGAQSIAALTYGTETIPKVDKIVGPGNQFVAYAKKYLFGQVGIDQIAGPTEIALIIDDTADLDAIVYDVFAQAEHDELARTYVIGEDAQVLKDLESRIAKALPNVDRYDIVSKSIANQHYLIHASNFDEACHVMNTIAPEHASIQTVNPQPYIEKVKYVGALFIGHYSPEVIGDYVAGPSHVLPTNRTARFTNGLSVNDFLTRNTVIHLSKDTFEQIADSAQHIAHVEALYNHQQSILIRQS</sequence>
<proteinExistence type="inferred from homology"/>
<name>HISX_STAAW</name>
<evidence type="ECO:0000255" key="1">
    <source>
        <dbReference type="HAMAP-Rule" id="MF_01024"/>
    </source>
</evidence>
<reference key="1">
    <citation type="journal article" date="2002" name="Lancet">
        <title>Genome and virulence determinants of high virulence community-acquired MRSA.</title>
        <authorList>
            <person name="Baba T."/>
            <person name="Takeuchi F."/>
            <person name="Kuroda M."/>
            <person name="Yuzawa H."/>
            <person name="Aoki K."/>
            <person name="Oguchi A."/>
            <person name="Nagai Y."/>
            <person name="Iwama N."/>
            <person name="Asano K."/>
            <person name="Naimi T."/>
            <person name="Kuroda H."/>
            <person name="Cui L."/>
            <person name="Yamamoto K."/>
            <person name="Hiramatsu K."/>
        </authorList>
    </citation>
    <scope>NUCLEOTIDE SEQUENCE [LARGE SCALE GENOMIC DNA]</scope>
    <source>
        <strain>MW2</strain>
    </source>
</reference>
<protein>
    <recommendedName>
        <fullName evidence="1">Histidinol dehydrogenase</fullName>
        <shortName evidence="1">HDH</shortName>
        <ecNumber evidence="1">1.1.1.23</ecNumber>
    </recommendedName>
</protein>
<dbReference type="EC" id="1.1.1.23" evidence="1"/>
<dbReference type="EMBL" id="BA000033">
    <property type="protein sequence ID" value="BAB96462.1"/>
    <property type="molecule type" value="Genomic_DNA"/>
</dbReference>
<dbReference type="RefSeq" id="WP_000930649.1">
    <property type="nucleotide sequence ID" value="NC_003923.1"/>
</dbReference>
<dbReference type="SMR" id="P63954"/>
<dbReference type="KEGG" id="sam:MW2597"/>
<dbReference type="HOGENOM" id="CLU_006732_3_3_9"/>
<dbReference type="UniPathway" id="UPA00031">
    <property type="reaction ID" value="UER00014"/>
</dbReference>
<dbReference type="GO" id="GO:0005829">
    <property type="term" value="C:cytosol"/>
    <property type="evidence" value="ECO:0007669"/>
    <property type="project" value="TreeGrafter"/>
</dbReference>
<dbReference type="GO" id="GO:0004399">
    <property type="term" value="F:histidinol dehydrogenase activity"/>
    <property type="evidence" value="ECO:0007669"/>
    <property type="project" value="UniProtKB-UniRule"/>
</dbReference>
<dbReference type="GO" id="GO:0051287">
    <property type="term" value="F:NAD binding"/>
    <property type="evidence" value="ECO:0007669"/>
    <property type="project" value="InterPro"/>
</dbReference>
<dbReference type="GO" id="GO:0008270">
    <property type="term" value="F:zinc ion binding"/>
    <property type="evidence" value="ECO:0007669"/>
    <property type="project" value="UniProtKB-UniRule"/>
</dbReference>
<dbReference type="GO" id="GO:0000105">
    <property type="term" value="P:L-histidine biosynthetic process"/>
    <property type="evidence" value="ECO:0007669"/>
    <property type="project" value="UniProtKB-UniRule"/>
</dbReference>
<dbReference type="CDD" id="cd06572">
    <property type="entry name" value="Histidinol_dh"/>
    <property type="match status" value="1"/>
</dbReference>
<dbReference type="FunFam" id="3.40.50.1980:FF:000001">
    <property type="entry name" value="Histidinol dehydrogenase"/>
    <property type="match status" value="1"/>
</dbReference>
<dbReference type="FunFam" id="3.40.50.1980:FF:000026">
    <property type="entry name" value="Histidinol dehydrogenase"/>
    <property type="match status" value="1"/>
</dbReference>
<dbReference type="Gene3D" id="1.20.5.1300">
    <property type="match status" value="1"/>
</dbReference>
<dbReference type="Gene3D" id="3.40.50.1980">
    <property type="entry name" value="Nitrogenase molybdenum iron protein domain"/>
    <property type="match status" value="2"/>
</dbReference>
<dbReference type="HAMAP" id="MF_01024">
    <property type="entry name" value="HisD"/>
    <property type="match status" value="1"/>
</dbReference>
<dbReference type="InterPro" id="IPR016161">
    <property type="entry name" value="Ald_DH/histidinol_DH"/>
</dbReference>
<dbReference type="InterPro" id="IPR001692">
    <property type="entry name" value="Histidinol_DH_CS"/>
</dbReference>
<dbReference type="InterPro" id="IPR022695">
    <property type="entry name" value="Histidinol_DH_monofunct"/>
</dbReference>
<dbReference type="InterPro" id="IPR012131">
    <property type="entry name" value="Hstdl_DH"/>
</dbReference>
<dbReference type="NCBIfam" id="TIGR00069">
    <property type="entry name" value="hisD"/>
    <property type="match status" value="1"/>
</dbReference>
<dbReference type="NCBIfam" id="NF010343">
    <property type="entry name" value="PRK13770.1"/>
    <property type="match status" value="1"/>
</dbReference>
<dbReference type="PANTHER" id="PTHR21256:SF2">
    <property type="entry name" value="HISTIDINE BIOSYNTHESIS TRIFUNCTIONAL PROTEIN"/>
    <property type="match status" value="1"/>
</dbReference>
<dbReference type="PANTHER" id="PTHR21256">
    <property type="entry name" value="HISTIDINOL DEHYDROGENASE HDH"/>
    <property type="match status" value="1"/>
</dbReference>
<dbReference type="Pfam" id="PF00815">
    <property type="entry name" value="Histidinol_dh"/>
    <property type="match status" value="1"/>
</dbReference>
<dbReference type="PIRSF" id="PIRSF000099">
    <property type="entry name" value="Histidinol_dh"/>
    <property type="match status" value="1"/>
</dbReference>
<dbReference type="PRINTS" id="PR00083">
    <property type="entry name" value="HOLDHDRGNASE"/>
</dbReference>
<dbReference type="SUPFAM" id="SSF53720">
    <property type="entry name" value="ALDH-like"/>
    <property type="match status" value="1"/>
</dbReference>
<dbReference type="PROSITE" id="PS00611">
    <property type="entry name" value="HISOL_DEHYDROGENASE"/>
    <property type="match status" value="1"/>
</dbReference>